<reference key="1">
    <citation type="journal article" date="2004" name="Nucleic Acids Res.">
        <title>The genome sequence of Bacillus cereus ATCC 10987 reveals metabolic adaptations and a large plasmid related to Bacillus anthracis pXO1.</title>
        <authorList>
            <person name="Rasko D.A."/>
            <person name="Ravel J."/>
            <person name="Oekstad O.A."/>
            <person name="Helgason E."/>
            <person name="Cer R.Z."/>
            <person name="Jiang L."/>
            <person name="Shores K.A."/>
            <person name="Fouts D.E."/>
            <person name="Tourasse N.J."/>
            <person name="Angiuoli S.V."/>
            <person name="Kolonay J.F."/>
            <person name="Nelson W.C."/>
            <person name="Kolstoe A.-B."/>
            <person name="Fraser C.M."/>
            <person name="Read T.D."/>
        </authorList>
    </citation>
    <scope>NUCLEOTIDE SEQUENCE [LARGE SCALE GENOMIC DNA]</scope>
    <source>
        <strain>ATCC 10987 / NRS 248</strain>
    </source>
</reference>
<name>THIC_BACC1</name>
<protein>
    <recommendedName>
        <fullName evidence="1">Phosphomethylpyrimidine synthase</fullName>
        <ecNumber evidence="1">4.1.99.17</ecNumber>
    </recommendedName>
    <alternativeName>
        <fullName evidence="1">Hydroxymethylpyrimidine phosphate synthase</fullName>
        <shortName evidence="1">HMP-P synthase</shortName>
        <shortName evidence="1">HMP-phosphate synthase</shortName>
        <shortName evidence="1">HMPP synthase</shortName>
    </alternativeName>
    <alternativeName>
        <fullName evidence="1">Thiamine biosynthesis protein ThiC</fullName>
    </alternativeName>
</protein>
<proteinExistence type="inferred from homology"/>
<gene>
    <name evidence="1" type="primary">thiC</name>
    <name type="ordered locus">BCE_5341</name>
</gene>
<keyword id="KW-0004">4Fe-4S</keyword>
<keyword id="KW-0408">Iron</keyword>
<keyword id="KW-0411">Iron-sulfur</keyword>
<keyword id="KW-0456">Lyase</keyword>
<keyword id="KW-0479">Metal-binding</keyword>
<keyword id="KW-0949">S-adenosyl-L-methionine</keyword>
<keyword id="KW-0784">Thiamine biosynthesis</keyword>
<keyword id="KW-0862">Zinc</keyword>
<comment type="function">
    <text evidence="1">Catalyzes the synthesis of the hydroxymethylpyrimidine phosphate (HMP-P) moiety of thiamine from aminoimidazole ribotide (AIR) in a radical S-adenosyl-L-methionine (SAM)-dependent reaction.</text>
</comment>
<comment type="catalytic activity">
    <reaction evidence="1">
        <text>5-amino-1-(5-phospho-beta-D-ribosyl)imidazole + S-adenosyl-L-methionine = 4-amino-2-methyl-5-(phosphooxymethyl)pyrimidine + CO + 5'-deoxyadenosine + formate + L-methionine + 3 H(+)</text>
        <dbReference type="Rhea" id="RHEA:24840"/>
        <dbReference type="ChEBI" id="CHEBI:15378"/>
        <dbReference type="ChEBI" id="CHEBI:15740"/>
        <dbReference type="ChEBI" id="CHEBI:17245"/>
        <dbReference type="ChEBI" id="CHEBI:17319"/>
        <dbReference type="ChEBI" id="CHEBI:57844"/>
        <dbReference type="ChEBI" id="CHEBI:58354"/>
        <dbReference type="ChEBI" id="CHEBI:59789"/>
        <dbReference type="ChEBI" id="CHEBI:137981"/>
        <dbReference type="EC" id="4.1.99.17"/>
    </reaction>
</comment>
<comment type="cofactor">
    <cofactor evidence="1">
        <name>[4Fe-4S] cluster</name>
        <dbReference type="ChEBI" id="CHEBI:49883"/>
    </cofactor>
    <text evidence="1">Binds 1 [4Fe-4S] cluster per subunit. The cluster is coordinated with 3 cysteines and an exchangeable S-adenosyl-L-methionine.</text>
</comment>
<comment type="pathway">
    <text evidence="1">Cofactor biosynthesis; thiamine diphosphate biosynthesis.</text>
</comment>
<comment type="similarity">
    <text evidence="1">Belongs to the ThiC family.</text>
</comment>
<accession>P61423</accession>
<evidence type="ECO:0000255" key="1">
    <source>
        <dbReference type="HAMAP-Rule" id="MF_00089"/>
    </source>
</evidence>
<evidence type="ECO:0000256" key="2">
    <source>
        <dbReference type="SAM" id="MobiDB-lite"/>
    </source>
</evidence>
<dbReference type="EC" id="4.1.99.17" evidence="1"/>
<dbReference type="EMBL" id="AE017194">
    <property type="protein sequence ID" value="AAS44241.1"/>
    <property type="molecule type" value="Genomic_DNA"/>
</dbReference>
<dbReference type="SMR" id="P61423"/>
<dbReference type="KEGG" id="bca:BCE_5341"/>
<dbReference type="HOGENOM" id="CLU_013181_2_1_9"/>
<dbReference type="UniPathway" id="UPA00060"/>
<dbReference type="Proteomes" id="UP000002527">
    <property type="component" value="Chromosome"/>
</dbReference>
<dbReference type="GO" id="GO:0005829">
    <property type="term" value="C:cytosol"/>
    <property type="evidence" value="ECO:0007669"/>
    <property type="project" value="TreeGrafter"/>
</dbReference>
<dbReference type="GO" id="GO:0051539">
    <property type="term" value="F:4 iron, 4 sulfur cluster binding"/>
    <property type="evidence" value="ECO:0007669"/>
    <property type="project" value="UniProtKB-KW"/>
</dbReference>
<dbReference type="GO" id="GO:0016830">
    <property type="term" value="F:carbon-carbon lyase activity"/>
    <property type="evidence" value="ECO:0007669"/>
    <property type="project" value="InterPro"/>
</dbReference>
<dbReference type="GO" id="GO:0008270">
    <property type="term" value="F:zinc ion binding"/>
    <property type="evidence" value="ECO:0007669"/>
    <property type="project" value="UniProtKB-UniRule"/>
</dbReference>
<dbReference type="GO" id="GO:0009228">
    <property type="term" value="P:thiamine biosynthetic process"/>
    <property type="evidence" value="ECO:0007669"/>
    <property type="project" value="UniProtKB-KW"/>
</dbReference>
<dbReference type="GO" id="GO:0009229">
    <property type="term" value="P:thiamine diphosphate biosynthetic process"/>
    <property type="evidence" value="ECO:0007669"/>
    <property type="project" value="UniProtKB-UniRule"/>
</dbReference>
<dbReference type="FunFam" id="3.20.20.540:FF:000001">
    <property type="entry name" value="Phosphomethylpyrimidine synthase"/>
    <property type="match status" value="1"/>
</dbReference>
<dbReference type="Gene3D" id="6.10.250.620">
    <property type="match status" value="1"/>
</dbReference>
<dbReference type="Gene3D" id="3.20.20.540">
    <property type="entry name" value="Radical SAM ThiC family, central domain"/>
    <property type="match status" value="1"/>
</dbReference>
<dbReference type="HAMAP" id="MF_00089">
    <property type="entry name" value="ThiC"/>
    <property type="match status" value="1"/>
</dbReference>
<dbReference type="InterPro" id="IPR037509">
    <property type="entry name" value="ThiC"/>
</dbReference>
<dbReference type="InterPro" id="IPR025747">
    <property type="entry name" value="ThiC-associated_dom"/>
</dbReference>
<dbReference type="InterPro" id="IPR038521">
    <property type="entry name" value="ThiC/Bza_core_dom"/>
</dbReference>
<dbReference type="InterPro" id="IPR002817">
    <property type="entry name" value="ThiC/BzaA/B"/>
</dbReference>
<dbReference type="NCBIfam" id="NF006763">
    <property type="entry name" value="PRK09284.1"/>
    <property type="match status" value="1"/>
</dbReference>
<dbReference type="NCBIfam" id="NF009895">
    <property type="entry name" value="PRK13352.1"/>
    <property type="match status" value="1"/>
</dbReference>
<dbReference type="NCBIfam" id="TIGR00190">
    <property type="entry name" value="thiC"/>
    <property type="match status" value="1"/>
</dbReference>
<dbReference type="PANTHER" id="PTHR30557:SF1">
    <property type="entry name" value="PHOSPHOMETHYLPYRIMIDINE SYNTHASE, CHLOROPLASTIC"/>
    <property type="match status" value="1"/>
</dbReference>
<dbReference type="PANTHER" id="PTHR30557">
    <property type="entry name" value="THIAMINE BIOSYNTHESIS PROTEIN THIC"/>
    <property type="match status" value="1"/>
</dbReference>
<dbReference type="Pfam" id="PF13667">
    <property type="entry name" value="ThiC-associated"/>
    <property type="match status" value="1"/>
</dbReference>
<dbReference type="Pfam" id="PF01964">
    <property type="entry name" value="ThiC_Rad_SAM"/>
    <property type="match status" value="1"/>
</dbReference>
<dbReference type="SFLD" id="SFLDF00407">
    <property type="entry name" value="phosphomethylpyrimidine_syntha"/>
    <property type="match status" value="1"/>
</dbReference>
<dbReference type="SFLD" id="SFLDG01114">
    <property type="entry name" value="phosphomethylpyrimidine_syntha"/>
    <property type="match status" value="1"/>
</dbReference>
<dbReference type="SFLD" id="SFLDS00113">
    <property type="entry name" value="Radical_SAM_Phosphomethylpyrim"/>
    <property type="match status" value="1"/>
</dbReference>
<sequence>MKQSVSAEQIELKSSLPGSKKVYVDGPREGMKVPMREIEQSDTNGVPNPPIRVYDTSGPYTDPEYKVELEKGLQAPRHSWILERGDVEAYEGREVKPEDDGVKVASKHTPVFPQMDRKPLRAKQGANVTQMHYARNGIITSEMEYVAIREGVEPEFVRKEIAEGRAILPANINHPEAEPMIIGRNFHVKVNANIGNSAVSSSIAEEVEKMTWATRWGADTIMDLSTGKNIHTTREWIIRNAPVPVGTVPIYQALEKVNGIAEDLTWEVYRDTLIEQAEQGVDYFTIHAGVLLRYIPITAKRTTGIVSRGGSIMAQWCLFHHKENFLYTHFEEICEIMKQYDVSFSLGDGLRPGSIADANDEAQFSELETLGELTKIAWKHDVQVMIEGPGHVPMHLIKENMEKELDICQGAPFYTLGPLTTDIAPGYDHITSAIGAAMIGWFGTAMLCYVTPKEHLGLPNKDDVREGVITYKIAAHAADLAKGHKTAHQRDDALSKARFEFRWRDQFNLSLDPERAMEYHDETLPAEGAKTAHFCSMCGPKFCSMRISHDIREYAKENDLETTEAIEKGMKEKAKEFKETGSHLYQ</sequence>
<organism>
    <name type="scientific">Bacillus cereus (strain ATCC 10987 / NRS 248)</name>
    <dbReference type="NCBI Taxonomy" id="222523"/>
    <lineage>
        <taxon>Bacteria</taxon>
        <taxon>Bacillati</taxon>
        <taxon>Bacillota</taxon>
        <taxon>Bacilli</taxon>
        <taxon>Bacillales</taxon>
        <taxon>Bacillaceae</taxon>
        <taxon>Bacillus</taxon>
        <taxon>Bacillus cereus group</taxon>
    </lineage>
</organism>
<feature type="chain" id="PRO_0000152783" description="Phosphomethylpyrimidine synthase">
    <location>
        <begin position="1"/>
        <end position="586"/>
    </location>
</feature>
<feature type="region of interest" description="Disordered" evidence="2">
    <location>
        <begin position="1"/>
        <end position="59"/>
    </location>
</feature>
<feature type="compositionally biased region" description="Basic and acidic residues" evidence="2">
    <location>
        <begin position="22"/>
        <end position="39"/>
    </location>
</feature>
<feature type="binding site" evidence="1">
    <location>
        <position position="193"/>
    </location>
    <ligand>
        <name>substrate</name>
    </ligand>
</feature>
<feature type="binding site" evidence="1">
    <location>
        <position position="222"/>
    </location>
    <ligand>
        <name>substrate</name>
    </ligand>
</feature>
<feature type="binding site" evidence="1">
    <location>
        <position position="251"/>
    </location>
    <ligand>
        <name>substrate</name>
    </ligand>
</feature>
<feature type="binding site" evidence="1">
    <location>
        <position position="287"/>
    </location>
    <ligand>
        <name>substrate</name>
    </ligand>
</feature>
<feature type="binding site" evidence="1">
    <location>
        <begin position="307"/>
        <end position="309"/>
    </location>
    <ligand>
        <name>substrate</name>
    </ligand>
</feature>
<feature type="binding site" evidence="1">
    <location>
        <begin position="348"/>
        <end position="351"/>
    </location>
    <ligand>
        <name>substrate</name>
    </ligand>
</feature>
<feature type="binding site" evidence="1">
    <location>
        <position position="387"/>
    </location>
    <ligand>
        <name>substrate</name>
    </ligand>
</feature>
<feature type="binding site" evidence="1">
    <location>
        <position position="391"/>
    </location>
    <ligand>
        <name>Zn(2+)</name>
        <dbReference type="ChEBI" id="CHEBI:29105"/>
    </ligand>
</feature>
<feature type="binding site" evidence="1">
    <location>
        <position position="414"/>
    </location>
    <ligand>
        <name>substrate</name>
    </ligand>
</feature>
<feature type="binding site" evidence="1">
    <location>
        <position position="455"/>
    </location>
    <ligand>
        <name>Zn(2+)</name>
        <dbReference type="ChEBI" id="CHEBI:29105"/>
    </ligand>
</feature>
<feature type="binding site" evidence="1">
    <location>
        <position position="535"/>
    </location>
    <ligand>
        <name>[4Fe-4S] cluster</name>
        <dbReference type="ChEBI" id="CHEBI:49883"/>
        <note>4Fe-4S-S-AdoMet</note>
    </ligand>
</feature>
<feature type="binding site" evidence="1">
    <location>
        <position position="538"/>
    </location>
    <ligand>
        <name>[4Fe-4S] cluster</name>
        <dbReference type="ChEBI" id="CHEBI:49883"/>
        <note>4Fe-4S-S-AdoMet</note>
    </ligand>
</feature>
<feature type="binding site" evidence="1">
    <location>
        <position position="543"/>
    </location>
    <ligand>
        <name>[4Fe-4S] cluster</name>
        <dbReference type="ChEBI" id="CHEBI:49883"/>
        <note>4Fe-4S-S-AdoMet</note>
    </ligand>
</feature>